<accession>A6UB85</accession>
<keyword id="KW-0131">Cell cycle</keyword>
<keyword id="KW-0132">Cell division</keyword>
<keyword id="KW-0997">Cell inner membrane</keyword>
<keyword id="KW-1003">Cell membrane</keyword>
<keyword id="KW-0133">Cell shape</keyword>
<keyword id="KW-0961">Cell wall biogenesis/degradation</keyword>
<keyword id="KW-0328">Glycosyltransferase</keyword>
<keyword id="KW-0472">Membrane</keyword>
<keyword id="KW-0573">Peptidoglycan synthesis</keyword>
<keyword id="KW-0808">Transferase</keyword>
<evidence type="ECO:0000255" key="1">
    <source>
        <dbReference type="HAMAP-Rule" id="MF_00033"/>
    </source>
</evidence>
<dbReference type="EC" id="2.4.1.227" evidence="1"/>
<dbReference type="EMBL" id="CP000738">
    <property type="protein sequence ID" value="ABR60915.1"/>
    <property type="molecule type" value="Genomic_DNA"/>
</dbReference>
<dbReference type="RefSeq" id="WP_011976212.1">
    <property type="nucleotide sequence ID" value="NC_009636.1"/>
</dbReference>
<dbReference type="RefSeq" id="YP_001327750.1">
    <property type="nucleotide sequence ID" value="NC_009636.1"/>
</dbReference>
<dbReference type="SMR" id="A6UB85"/>
<dbReference type="STRING" id="366394.Smed_2082"/>
<dbReference type="CAZy" id="GT28">
    <property type="family name" value="Glycosyltransferase Family 28"/>
</dbReference>
<dbReference type="KEGG" id="smd:Smed_2082"/>
<dbReference type="PATRIC" id="fig|366394.8.peg.5240"/>
<dbReference type="eggNOG" id="COG0707">
    <property type="taxonomic scope" value="Bacteria"/>
</dbReference>
<dbReference type="HOGENOM" id="CLU_037404_2_1_5"/>
<dbReference type="OrthoDB" id="9808936at2"/>
<dbReference type="UniPathway" id="UPA00219"/>
<dbReference type="Proteomes" id="UP000001108">
    <property type="component" value="Chromosome"/>
</dbReference>
<dbReference type="GO" id="GO:0005886">
    <property type="term" value="C:plasma membrane"/>
    <property type="evidence" value="ECO:0007669"/>
    <property type="project" value="UniProtKB-SubCell"/>
</dbReference>
<dbReference type="GO" id="GO:0051991">
    <property type="term" value="F:UDP-N-acetyl-D-glucosamine:N-acetylmuramoyl-L-alanyl-D-glutamyl-meso-2,6-diaminopimelyl-D-alanyl-D-alanine-diphosphoundecaprenol 4-beta-N-acetylglucosaminlytransferase activity"/>
    <property type="evidence" value="ECO:0007669"/>
    <property type="project" value="RHEA"/>
</dbReference>
<dbReference type="GO" id="GO:0050511">
    <property type="term" value="F:undecaprenyldiphospho-muramoylpentapeptide beta-N-acetylglucosaminyltransferase activity"/>
    <property type="evidence" value="ECO:0007669"/>
    <property type="project" value="UniProtKB-UniRule"/>
</dbReference>
<dbReference type="GO" id="GO:0005975">
    <property type="term" value="P:carbohydrate metabolic process"/>
    <property type="evidence" value="ECO:0007669"/>
    <property type="project" value="InterPro"/>
</dbReference>
<dbReference type="GO" id="GO:0051301">
    <property type="term" value="P:cell division"/>
    <property type="evidence" value="ECO:0007669"/>
    <property type="project" value="UniProtKB-KW"/>
</dbReference>
<dbReference type="GO" id="GO:0071555">
    <property type="term" value="P:cell wall organization"/>
    <property type="evidence" value="ECO:0007669"/>
    <property type="project" value="UniProtKB-KW"/>
</dbReference>
<dbReference type="GO" id="GO:0030259">
    <property type="term" value="P:lipid glycosylation"/>
    <property type="evidence" value="ECO:0007669"/>
    <property type="project" value="UniProtKB-UniRule"/>
</dbReference>
<dbReference type="GO" id="GO:0009252">
    <property type="term" value="P:peptidoglycan biosynthetic process"/>
    <property type="evidence" value="ECO:0007669"/>
    <property type="project" value="UniProtKB-UniRule"/>
</dbReference>
<dbReference type="GO" id="GO:0008360">
    <property type="term" value="P:regulation of cell shape"/>
    <property type="evidence" value="ECO:0007669"/>
    <property type="project" value="UniProtKB-KW"/>
</dbReference>
<dbReference type="CDD" id="cd03785">
    <property type="entry name" value="GT28_MurG"/>
    <property type="match status" value="1"/>
</dbReference>
<dbReference type="Gene3D" id="3.40.50.2000">
    <property type="entry name" value="Glycogen Phosphorylase B"/>
    <property type="match status" value="2"/>
</dbReference>
<dbReference type="HAMAP" id="MF_00033">
    <property type="entry name" value="MurG"/>
    <property type="match status" value="1"/>
</dbReference>
<dbReference type="InterPro" id="IPR006009">
    <property type="entry name" value="GlcNAc_MurG"/>
</dbReference>
<dbReference type="InterPro" id="IPR007235">
    <property type="entry name" value="Glyco_trans_28_C"/>
</dbReference>
<dbReference type="InterPro" id="IPR004276">
    <property type="entry name" value="GlycoTrans_28_N"/>
</dbReference>
<dbReference type="NCBIfam" id="TIGR01133">
    <property type="entry name" value="murG"/>
    <property type="match status" value="1"/>
</dbReference>
<dbReference type="PANTHER" id="PTHR21015:SF22">
    <property type="entry name" value="GLYCOSYLTRANSFERASE"/>
    <property type="match status" value="1"/>
</dbReference>
<dbReference type="PANTHER" id="PTHR21015">
    <property type="entry name" value="UDP-N-ACETYLGLUCOSAMINE--N-ACETYLMURAMYL-(PENTAPEPTIDE) PYROPHOSPHORYL-UNDECAPRENOL N-ACETYLGLUCOSAMINE TRANSFERASE 1"/>
    <property type="match status" value="1"/>
</dbReference>
<dbReference type="Pfam" id="PF04101">
    <property type="entry name" value="Glyco_tran_28_C"/>
    <property type="match status" value="1"/>
</dbReference>
<dbReference type="Pfam" id="PF03033">
    <property type="entry name" value="Glyco_transf_28"/>
    <property type="match status" value="1"/>
</dbReference>
<dbReference type="SUPFAM" id="SSF53756">
    <property type="entry name" value="UDP-Glycosyltransferase/glycogen phosphorylase"/>
    <property type="match status" value="1"/>
</dbReference>
<reference key="1">
    <citation type="submission" date="2007-06" db="EMBL/GenBank/DDBJ databases">
        <title>Complete sequence of Sinorhizobium medicae WSM419 chromosome.</title>
        <authorList>
            <consortium name="US DOE Joint Genome Institute"/>
            <person name="Copeland A."/>
            <person name="Lucas S."/>
            <person name="Lapidus A."/>
            <person name="Barry K."/>
            <person name="Glavina del Rio T."/>
            <person name="Dalin E."/>
            <person name="Tice H."/>
            <person name="Pitluck S."/>
            <person name="Chain P."/>
            <person name="Malfatti S."/>
            <person name="Shin M."/>
            <person name="Vergez L."/>
            <person name="Schmutz J."/>
            <person name="Larimer F."/>
            <person name="Land M."/>
            <person name="Hauser L."/>
            <person name="Kyrpides N."/>
            <person name="Mikhailova N."/>
            <person name="Reeve W.G."/>
            <person name="Richardson P."/>
        </authorList>
    </citation>
    <scope>NUCLEOTIDE SEQUENCE [LARGE SCALE GENOMIC DNA]</scope>
    <source>
        <strain>WSM419</strain>
    </source>
</reference>
<organism>
    <name type="scientific">Sinorhizobium medicae (strain WSM419)</name>
    <name type="common">Ensifer medicae</name>
    <dbReference type="NCBI Taxonomy" id="366394"/>
    <lineage>
        <taxon>Bacteria</taxon>
        <taxon>Pseudomonadati</taxon>
        <taxon>Pseudomonadota</taxon>
        <taxon>Alphaproteobacteria</taxon>
        <taxon>Hyphomicrobiales</taxon>
        <taxon>Rhizobiaceae</taxon>
        <taxon>Sinorhizobium/Ensifer group</taxon>
        <taxon>Sinorhizobium</taxon>
    </lineage>
</organism>
<protein>
    <recommendedName>
        <fullName evidence="1">UDP-N-acetylglucosamine--N-acetylmuramyl-(pentapeptide) pyrophosphoryl-undecaprenol N-acetylglucosamine transferase</fullName>
        <ecNumber evidence="1">2.4.1.227</ecNumber>
    </recommendedName>
    <alternativeName>
        <fullName evidence="1">Undecaprenyl-PP-MurNAc-pentapeptide-UDPGlcNAc GlcNAc transferase</fullName>
    </alternativeName>
</protein>
<proteinExistence type="inferred from homology"/>
<sequence length="374" mass="38828">MDKGIILLAAGGTGGHLFPAEALAHELKASGYSVHLVTDSRAERFAGRFPADEIHVVASATIGSKNPVKLARSAWKLWTGLRAARRLISRLKPMAVVGFGGYPTVPPLLAATGMGVPTIIHEQNAVMGRANKMLASRVAAIAGGFLPEGTGAFAAKTVATGNPVRPAVLEAARVPYAPAGGDAPFHLVVFGGSQGAQFFSKAVPQAVCRLDDALRRRLKVTQQARPEDREGVIASYEKLDIPAEVSPFFTDMAGRIASAQLVICRSGASTVSEVSVIGRPAILVPYPYALDHDQAANAAALAAKGGARVIAQVELSAERLANILTDAMSNPDTLAQMAAGARQTGKAGAARLLALLVEAIASGSTVAKFKETRS</sequence>
<gene>
    <name evidence="1" type="primary">murG</name>
    <name type="ordered locus">Smed_2082</name>
</gene>
<name>MURG_SINMW</name>
<comment type="function">
    <text evidence="1">Cell wall formation. Catalyzes the transfer of a GlcNAc subunit on undecaprenyl-pyrophosphoryl-MurNAc-pentapeptide (lipid intermediate I) to form undecaprenyl-pyrophosphoryl-MurNAc-(pentapeptide)GlcNAc (lipid intermediate II).</text>
</comment>
<comment type="catalytic activity">
    <reaction evidence="1">
        <text>di-trans,octa-cis-undecaprenyl diphospho-N-acetyl-alpha-D-muramoyl-L-alanyl-D-glutamyl-meso-2,6-diaminopimeloyl-D-alanyl-D-alanine + UDP-N-acetyl-alpha-D-glucosamine = di-trans,octa-cis-undecaprenyl diphospho-[N-acetyl-alpha-D-glucosaminyl-(1-&gt;4)]-N-acetyl-alpha-D-muramoyl-L-alanyl-D-glutamyl-meso-2,6-diaminopimeloyl-D-alanyl-D-alanine + UDP + H(+)</text>
        <dbReference type="Rhea" id="RHEA:31227"/>
        <dbReference type="ChEBI" id="CHEBI:15378"/>
        <dbReference type="ChEBI" id="CHEBI:57705"/>
        <dbReference type="ChEBI" id="CHEBI:58223"/>
        <dbReference type="ChEBI" id="CHEBI:61387"/>
        <dbReference type="ChEBI" id="CHEBI:61388"/>
        <dbReference type="EC" id="2.4.1.227"/>
    </reaction>
</comment>
<comment type="pathway">
    <text evidence="1">Cell wall biogenesis; peptidoglycan biosynthesis.</text>
</comment>
<comment type="subcellular location">
    <subcellularLocation>
        <location evidence="1">Cell inner membrane</location>
        <topology evidence="1">Peripheral membrane protein</topology>
        <orientation evidence="1">Cytoplasmic side</orientation>
    </subcellularLocation>
</comment>
<comment type="similarity">
    <text evidence="1">Belongs to the glycosyltransferase 28 family. MurG subfamily.</text>
</comment>
<feature type="chain" id="PRO_0000315169" description="UDP-N-acetylglucosamine--N-acetylmuramyl-(pentapeptide) pyrophosphoryl-undecaprenol N-acetylglucosamine transferase">
    <location>
        <begin position="1"/>
        <end position="374"/>
    </location>
</feature>
<feature type="binding site" evidence="1">
    <location>
        <begin position="13"/>
        <end position="15"/>
    </location>
    <ligand>
        <name>UDP-N-acetyl-alpha-D-glucosamine</name>
        <dbReference type="ChEBI" id="CHEBI:57705"/>
    </ligand>
</feature>
<feature type="binding site" evidence="1">
    <location>
        <position position="124"/>
    </location>
    <ligand>
        <name>UDP-N-acetyl-alpha-D-glucosamine</name>
        <dbReference type="ChEBI" id="CHEBI:57705"/>
    </ligand>
</feature>
<feature type="binding site" evidence="1">
    <location>
        <position position="165"/>
    </location>
    <ligand>
        <name>UDP-N-acetyl-alpha-D-glucosamine</name>
        <dbReference type="ChEBI" id="CHEBI:57705"/>
    </ligand>
</feature>
<feature type="binding site" evidence="1">
    <location>
        <position position="193"/>
    </location>
    <ligand>
        <name>UDP-N-acetyl-alpha-D-glucosamine</name>
        <dbReference type="ChEBI" id="CHEBI:57705"/>
    </ligand>
</feature>
<feature type="binding site" evidence="1">
    <location>
        <position position="294"/>
    </location>
    <ligand>
        <name>UDP-N-acetyl-alpha-D-glucosamine</name>
        <dbReference type="ChEBI" id="CHEBI:57705"/>
    </ligand>
</feature>